<reference key="1">
    <citation type="journal article" date="2003" name="Fungal Genet. Biol.">
        <title>A class V chitin synthase gene, chsA is essential for conidial and hyphal wall strength in the fungus Colletotrichum graminicola (Glomerella graminicola).</title>
        <authorList>
            <person name="Amnuaykanjanasin A."/>
            <person name="Epstein L."/>
        </authorList>
    </citation>
    <scope>NUCLEOTIDE SEQUENCE [GENOMIC DNA]</scope>
    <scope>FUNCTION</scope>
    <scope>DISRUPTION PHENOTYPE</scope>
</reference>
<reference key="2">
    <citation type="submission" date="2005-07" db="EMBL/GenBank/DDBJ databases">
        <authorList>
            <person name="Amnuaykanjanasin A."/>
            <person name="Epstein L."/>
        </authorList>
    </citation>
    <scope>NUCLEOTIDE SEQUENCE [MRNA]</scope>
</reference>
<comment type="function">
    <text evidence="5 8">Polymerizes chitin, a structural polymer of the cell wall and septum, by transferring the sugar moiety of UDP-GlcNAc to the non-reducing end of the growing chitin polymer (Probable). Responsible for about 29% of the chitin in conidial walls, is essential for conidial wall strength in media with high water potential and contributes to strength of hyphal tips (PubMed:12684017).</text>
</comment>
<comment type="catalytic activity">
    <reaction evidence="8">
        <text>[(1-&gt;4)-N-acetyl-beta-D-glucosaminyl](n) + UDP-N-acetyl-alpha-D-glucosamine = [(1-&gt;4)-N-acetyl-beta-D-glucosaminyl](n+1) + UDP + H(+)</text>
        <dbReference type="Rhea" id="RHEA:16637"/>
        <dbReference type="Rhea" id="RHEA-COMP:9593"/>
        <dbReference type="Rhea" id="RHEA-COMP:9595"/>
        <dbReference type="ChEBI" id="CHEBI:15378"/>
        <dbReference type="ChEBI" id="CHEBI:17029"/>
        <dbReference type="ChEBI" id="CHEBI:57705"/>
        <dbReference type="ChEBI" id="CHEBI:58223"/>
        <dbReference type="EC" id="2.4.1.16"/>
    </reaction>
    <physiologicalReaction direction="left-to-right" evidence="8">
        <dbReference type="Rhea" id="RHEA:16638"/>
    </physiologicalReaction>
</comment>
<comment type="subcellular location">
    <subcellularLocation>
        <location evidence="7">Cell membrane</location>
        <topology evidence="1">Multi-pass membrane protein</topology>
    </subcellularLocation>
</comment>
<comment type="disruption phenotype">
    <text evidence="5">Reduces the content of chitin in conidia walls.</text>
</comment>
<comment type="similarity">
    <text evidence="7">Belongs to the chitin synthase family. Class V subfamily.</text>
</comment>
<protein>
    <recommendedName>
        <fullName evidence="6">Chitin synthase A</fullName>
        <ecNumber evidence="8">2.4.1.16</ecNumber>
    </recommendedName>
    <alternativeName>
        <fullName evidence="7">Chitin-UDP acetyl-glucosaminyl transferase A</fullName>
    </alternativeName>
    <alternativeName>
        <fullName evidence="6">Class-V chitin synthase A</fullName>
    </alternativeName>
</protein>
<dbReference type="EC" id="2.4.1.16" evidence="8"/>
<dbReference type="EMBL" id="AY064208">
    <property type="protein sequence ID" value="AAL55424.1"/>
    <property type="molecule type" value="Genomic_DNA"/>
</dbReference>
<dbReference type="EMBL" id="DQ132981">
    <property type="protein sequence ID" value="AAZ43360.1"/>
    <property type="molecule type" value="mRNA"/>
</dbReference>
<dbReference type="CAZy" id="GT2">
    <property type="family name" value="Glycosyltransferase Family 2"/>
</dbReference>
<dbReference type="VEuPathDB" id="FungiDB:GLRG_08318"/>
<dbReference type="OMA" id="RLAEWAN"/>
<dbReference type="GO" id="GO:0030428">
    <property type="term" value="C:cell septum"/>
    <property type="evidence" value="ECO:0007669"/>
    <property type="project" value="TreeGrafter"/>
</dbReference>
<dbReference type="GO" id="GO:0016459">
    <property type="term" value="C:myosin complex"/>
    <property type="evidence" value="ECO:0007669"/>
    <property type="project" value="UniProtKB-KW"/>
</dbReference>
<dbReference type="GO" id="GO:0005886">
    <property type="term" value="C:plasma membrane"/>
    <property type="evidence" value="ECO:0007669"/>
    <property type="project" value="UniProtKB-SubCell"/>
</dbReference>
<dbReference type="GO" id="GO:0005524">
    <property type="term" value="F:ATP binding"/>
    <property type="evidence" value="ECO:0007669"/>
    <property type="project" value="InterPro"/>
</dbReference>
<dbReference type="GO" id="GO:0004100">
    <property type="term" value="F:chitin synthase activity"/>
    <property type="evidence" value="ECO:0007669"/>
    <property type="project" value="UniProtKB-EC"/>
</dbReference>
<dbReference type="GO" id="GO:0003774">
    <property type="term" value="F:cytoskeletal motor activity"/>
    <property type="evidence" value="ECO:0007669"/>
    <property type="project" value="InterPro"/>
</dbReference>
<dbReference type="GO" id="GO:0006031">
    <property type="term" value="P:chitin biosynthetic process"/>
    <property type="evidence" value="ECO:0007669"/>
    <property type="project" value="TreeGrafter"/>
</dbReference>
<dbReference type="GO" id="GO:0031505">
    <property type="term" value="P:fungal-type cell wall organization"/>
    <property type="evidence" value="ECO:0007669"/>
    <property type="project" value="TreeGrafter"/>
</dbReference>
<dbReference type="FunFam" id="1.10.10.820:FF:000010">
    <property type="entry name" value="Chitin synthase 6"/>
    <property type="match status" value="1"/>
</dbReference>
<dbReference type="FunFam" id="3.10.120.10:FF:000014">
    <property type="entry name" value="Chitin synthase 6"/>
    <property type="match status" value="1"/>
</dbReference>
<dbReference type="Gene3D" id="1.10.10.820">
    <property type="match status" value="1"/>
</dbReference>
<dbReference type="Gene3D" id="3.10.120.10">
    <property type="entry name" value="Cytochrome b5-like heme/steroid binding domain"/>
    <property type="match status" value="2"/>
</dbReference>
<dbReference type="Gene3D" id="1.10.10.60">
    <property type="entry name" value="Homeodomain-like"/>
    <property type="match status" value="1"/>
</dbReference>
<dbReference type="Gene3D" id="3.40.850.10">
    <property type="entry name" value="Kinesin motor domain"/>
    <property type="match status" value="1"/>
</dbReference>
<dbReference type="Gene3D" id="1.20.120.720">
    <property type="entry name" value="Myosin VI head, motor domain, U50 subdomain"/>
    <property type="match status" value="1"/>
</dbReference>
<dbReference type="InterPro" id="IPR004835">
    <property type="entry name" value="Chitin_synth"/>
</dbReference>
<dbReference type="InterPro" id="IPR001199">
    <property type="entry name" value="Cyt_B5-like_heme/steroid-bd"/>
</dbReference>
<dbReference type="InterPro" id="IPR036400">
    <property type="entry name" value="Cyt_B5-like_heme/steroid_sf"/>
</dbReference>
<dbReference type="InterPro" id="IPR014876">
    <property type="entry name" value="DEK_C"/>
</dbReference>
<dbReference type="InterPro" id="IPR036961">
    <property type="entry name" value="Kinesin_motor_dom_sf"/>
</dbReference>
<dbReference type="InterPro" id="IPR001609">
    <property type="entry name" value="Myosin_head_motor_dom-like"/>
</dbReference>
<dbReference type="InterPro" id="IPR029044">
    <property type="entry name" value="Nucleotide-diphossugar_trans"/>
</dbReference>
<dbReference type="InterPro" id="IPR027417">
    <property type="entry name" value="P-loop_NTPase"/>
</dbReference>
<dbReference type="PANTHER" id="PTHR22914">
    <property type="entry name" value="CHITIN SYNTHASE"/>
    <property type="match status" value="1"/>
</dbReference>
<dbReference type="PANTHER" id="PTHR22914:SF13">
    <property type="entry name" value="CHITIN SYNTHASE"/>
    <property type="match status" value="1"/>
</dbReference>
<dbReference type="Pfam" id="PF03142">
    <property type="entry name" value="Chitin_synth_2"/>
    <property type="match status" value="1"/>
</dbReference>
<dbReference type="Pfam" id="PF08766">
    <property type="entry name" value="DEK_C"/>
    <property type="match status" value="1"/>
</dbReference>
<dbReference type="SMART" id="SM01117">
    <property type="entry name" value="Cyt-b5"/>
    <property type="match status" value="2"/>
</dbReference>
<dbReference type="SMART" id="SM00242">
    <property type="entry name" value="MYSc"/>
    <property type="match status" value="1"/>
</dbReference>
<dbReference type="SUPFAM" id="SSF55856">
    <property type="entry name" value="Cytochrome b5-like heme/steroid binding domain"/>
    <property type="match status" value="1"/>
</dbReference>
<dbReference type="SUPFAM" id="SSF109715">
    <property type="entry name" value="DEK C-terminal domain"/>
    <property type="match status" value="1"/>
</dbReference>
<dbReference type="SUPFAM" id="SSF53448">
    <property type="entry name" value="Nucleotide-diphospho-sugar transferases"/>
    <property type="match status" value="1"/>
</dbReference>
<dbReference type="SUPFAM" id="SSF52540">
    <property type="entry name" value="P-loop containing nucleoside triphosphate hydrolases"/>
    <property type="match status" value="1"/>
</dbReference>
<dbReference type="PROSITE" id="PS51998">
    <property type="entry name" value="DEK_C"/>
    <property type="match status" value="1"/>
</dbReference>
<keyword id="KW-1003">Cell membrane</keyword>
<keyword id="KW-0325">Glycoprotein</keyword>
<keyword id="KW-0328">Glycosyltransferase</keyword>
<keyword id="KW-0472">Membrane</keyword>
<keyword id="KW-0505">Motor protein</keyword>
<keyword id="KW-0518">Myosin</keyword>
<keyword id="KW-0808">Transferase</keyword>
<keyword id="KW-0812">Transmembrane</keyword>
<keyword id="KW-1133">Transmembrane helix</keyword>
<sequence>MANGRMSMYSVASEGLGGPRAGQQPSQFSTTTLLNAIHNIYLSSQPFKLDAGTSLVVNTWLTASQTGPDGRTGGTIDAALGARAWEHARRRAEDGCIVLGSLHTSCPSLLTPFLSSLPLSLPSSLYKSLEAIQPFLRCSTPYNPSTPRQIALGVTLTLNLTGSLRGAAIALSQGGIDSTKGLLNIPVEAGYRAFDVFYYLLTSASTPAEREFLGLKSASSYALLAKSGTYEPPSYLPTADDAAAADDFRSALKDIGIKGSAHRNLISTLAGLLKLGDTLDYNLDEDVFDEICEDVSGLLGMDPETLATQCTTEDRATLVGGLYEALVDWVISKANEAISAQMVRIRDGTESIGGGGARTPTSNGEDDTVCITILDIPDPTLGKALAMRGVFDDTLGINSEMIADGVEVSAAGSTVVREMQAAIGEVGHELGIMTSATGRDRQHALEKREEVLEKIGHSADEDAFLKKLLFPITGQGIDLGRAGRLDLSSLLSSSRVWYHLSIHPTDDSPASLAALPSINSAWSAGTVSRQLRSWRLPEWANRRNKNLDFTADFDIDEFVQRYALLGCKDGREGIETWILERGWTNGEVVVGKERVWVRESAWWEAESMLDMKPLDSNLPGMGNVMAVNNLESGYSANGSGYFPTPMLDTTPNGSRDHLIAHQRNFSQGNLSQHTLAHNAAMRAPSVAPSGMRNVQAGDYGLGTKGDTFKGQVFYNNEGEFVGQMDPEIADGKHVEEKTMDKDRRIWVAIVWFWTFWIPSPLLSFVGRMKRPDVRMAWREKLTLVWFIVLINAAIVFWIVAFGKILCPNFDKAWNAKEVAYHTGENDFYVSFRGGVYDISKFWKIQHSDTAIETTKENMMPFAGLNMDDYFPPPLPLVCPGLGIAPTTTLQYNNTPEYVIGIHKSGILADDRTSALGATDWYSTKLLPKMREFYKGDLVWDKAFINSDGQNNDHMWVIYNGGVYDLTNYFKTLKVFQRVDSVNFLNADIVSAIESNPGEDVTDSWDEIVKTAANNATENASVQNSLNCIKNLFYVGIPDFRYSARCQTNNYIMLAMTIILCSVILVKFLAALQFGSKRRPAPQDKFVICQVPAYTEGEDSLRKALDSLTALQYDNKRKLICVICDGIIVGAGNDRPTPKIVLDILGVDPKVDPPALPFKSVGTGSEQLNYGKVYSGLYEFEGNVVPYLVVVKCGKESEQTKSKPGNRGKRDSQILLMSFLNRVHHRAPMSPLELEMFHQINNIIGVDPELYEYLMMVDADTCVREDSLNRLVSACANDAKIAGICGETGLQNDDKSWWTMIQVYEYFISHNLAKAFESLFGSVTCLPGCFTMYRLRTVDKGKPLIIADGVIRDYAVCDVDTLHKKNLLSLGEDRYLTTLMTKYFPSMKYKFIPDAYCQTAAPESWSVLLSQRRRWINSTIHNLFELMKLKEMCGFCCFSMRFVVFIDLFGTIILPATTIYLGYMIYLAASSTGQFPIISIIMLAAVYGLQALIFILKRQWQHIGWMIIYIMAFPIYSFALPIYSFWNQDNFSWGNTRIVIGEKGNKQLVAVDDEGFDPRSIPLQRWDDYAMANNLPGRRGGYMEKADMGYDDQYEMDEIRSVYSSVRQGSVLTGMNRNNTYMPPQSPAPFGHMVRASGAASPYHHDQAMANRQSMASLGTHDINRGQTPFQDFPSSRPSVSNLRGQANPSPGLGANRSQSALGLNRPHAAAQSTSSFDFQRGNMQGPDDSMIIEAIQGVLREVDLDTVTKKQVRALVEQRLQTGLVGERRTFMDRQIDNELANM</sequence>
<proteinExistence type="evidence at transcript level"/>
<gene>
    <name evidence="6" type="primary">chsA</name>
</gene>
<name>CHS5_COLGR</name>
<evidence type="ECO:0000255" key="1"/>
<evidence type="ECO:0000255" key="2">
    <source>
        <dbReference type="PROSITE-ProRule" id="PRU00498"/>
    </source>
</evidence>
<evidence type="ECO:0000255" key="3">
    <source>
        <dbReference type="PROSITE-ProRule" id="PRU01342"/>
    </source>
</evidence>
<evidence type="ECO:0000256" key="4">
    <source>
        <dbReference type="SAM" id="MobiDB-lite"/>
    </source>
</evidence>
<evidence type="ECO:0000269" key="5">
    <source>
    </source>
</evidence>
<evidence type="ECO:0000303" key="6">
    <source>
    </source>
</evidence>
<evidence type="ECO:0000305" key="7"/>
<evidence type="ECO:0000305" key="8">
    <source>
    </source>
</evidence>
<organism>
    <name type="scientific">Colletotrichum graminicola</name>
    <name type="common">Maize anthracnose fungus</name>
    <name type="synonym">Glomerella graminicola</name>
    <dbReference type="NCBI Taxonomy" id="31870"/>
    <lineage>
        <taxon>Eukaryota</taxon>
        <taxon>Fungi</taxon>
        <taxon>Dikarya</taxon>
        <taxon>Ascomycota</taxon>
        <taxon>Pezizomycotina</taxon>
        <taxon>Sordariomycetes</taxon>
        <taxon>Hypocreomycetidae</taxon>
        <taxon>Glomerellales</taxon>
        <taxon>Glomerellaceae</taxon>
        <taxon>Colletotrichum</taxon>
        <taxon>Colletotrichum graminicola species complex</taxon>
    </lineage>
</organism>
<feature type="chain" id="PRO_0000460857" description="Chitin synthase A">
    <location>
        <begin position="1"/>
        <end position="1783"/>
    </location>
</feature>
<feature type="transmembrane region" description="Helical" evidence="1">
    <location>
        <begin position="745"/>
        <end position="765"/>
    </location>
</feature>
<feature type="transmembrane region" description="Helical" evidence="1">
    <location>
        <begin position="781"/>
        <end position="801"/>
    </location>
</feature>
<feature type="transmembrane region" description="Helical" evidence="1">
    <location>
        <begin position="1051"/>
        <end position="1071"/>
    </location>
</feature>
<feature type="transmembrane region" description="Helical" evidence="1">
    <location>
        <begin position="1441"/>
        <end position="1461"/>
    </location>
</feature>
<feature type="transmembrane region" description="Helical" evidence="1">
    <location>
        <begin position="1474"/>
        <end position="1494"/>
    </location>
</feature>
<feature type="transmembrane region" description="Helical" evidence="1">
    <location>
        <begin position="1502"/>
        <end position="1522"/>
    </location>
</feature>
<feature type="domain" description="DEK-C" evidence="3">
    <location>
        <begin position="1725"/>
        <end position="1781"/>
    </location>
</feature>
<feature type="region of interest" description="Disordered" evidence="4">
    <location>
        <begin position="1659"/>
        <end position="1724"/>
    </location>
</feature>
<feature type="compositionally biased region" description="Polar residues" evidence="4">
    <location>
        <begin position="1664"/>
        <end position="1688"/>
    </location>
</feature>
<feature type="glycosylation site" description="N-linked (GlcNAc...) asparagine" evidence="2">
    <location>
        <position position="159"/>
    </location>
</feature>
<feature type="glycosylation site" description="N-linked (GlcNAc...) asparagine" evidence="2">
    <location>
        <position position="637"/>
    </location>
</feature>
<feature type="glycosylation site" description="N-linked (GlcNAc...) asparagine" evidence="2">
    <location>
        <position position="652"/>
    </location>
</feature>
<feature type="glycosylation site" description="N-linked (GlcNAc...) asparagine" evidence="2">
    <location>
        <position position="664"/>
    </location>
</feature>
<feature type="glycosylation site" description="N-linked (GlcNAc...) asparagine" evidence="2">
    <location>
        <position position="669"/>
    </location>
</feature>
<feature type="glycosylation site" description="N-linked (GlcNAc...) asparagine" evidence="2">
    <location>
        <position position="1014"/>
    </location>
</feature>
<feature type="glycosylation site" description="N-linked (GlcNAc...) asparagine" evidence="2">
    <location>
        <position position="1018"/>
    </location>
</feature>
<feature type="glycosylation site" description="N-linked (GlcNAc...) asparagine" evidence="2">
    <location>
        <position position="1416"/>
    </location>
</feature>
<feature type="glycosylation site" description="N-linked (GlcNAc...) asparagine" evidence="2">
    <location>
        <position position="1529"/>
    </location>
</feature>
<feature type="glycosylation site" description="N-linked (GlcNAc...) asparagine" evidence="2">
    <location>
        <position position="1617"/>
    </location>
</feature>
<feature type="glycosylation site" description="N-linked (GlcNAc...) asparagine" evidence="2">
    <location>
        <position position="1695"/>
    </location>
</feature>
<accession>Q86ZE3</accession>